<keyword id="KW-0903">Direct protein sequencing</keyword>
<keyword id="KW-1015">Disulfide bond</keyword>
<keyword id="KW-0325">Glycoprotein</keyword>
<keyword id="KW-0646">Protease inhibitor</keyword>
<keyword id="KW-0677">Repeat</keyword>
<keyword id="KW-0964">Secreted</keyword>
<keyword id="KW-0722">Serine protease inhibitor</keyword>
<protein>
    <recommendedName>
        <fullName>Ovomucoid</fullName>
    </recommendedName>
</protein>
<comment type="subcellular location">
    <subcellularLocation>
        <location>Secreted</location>
    </subcellularLocation>
</comment>
<comment type="domain">
    <text>Avian ovomucoid consists of three homologous, tandem Kazal family inhibitory domains.</text>
</comment>
<feature type="chain" id="PRO_0000073120" description="Ovomucoid">
    <location>
        <begin position="1" status="less than"/>
        <end position="54" status="greater than"/>
    </location>
</feature>
<feature type="domain" description="Kazal-like" evidence="1">
    <location>
        <begin position="4"/>
        <end position="54"/>
    </location>
</feature>
<feature type="site" description="Reactive bond 3">
    <location>
        <begin position="16"/>
        <end position="17"/>
    </location>
</feature>
<feature type="glycosylation site" description="N-linked (GlcNAc...) asparagine">
    <location>
        <position position="43"/>
    </location>
</feature>
<feature type="disulfide bond">
    <location>
        <begin position="6"/>
        <end position="36"/>
    </location>
</feature>
<feature type="disulfide bond">
    <location>
        <begin position="14"/>
        <end position="33"/>
    </location>
</feature>
<feature type="disulfide bond">
    <location>
        <begin position="22"/>
        <end position="54"/>
    </location>
</feature>
<feature type="non-terminal residue">
    <location>
        <position position="1"/>
    </location>
</feature>
<feature type="non-terminal residue">
    <location>
        <position position="54"/>
    </location>
</feature>
<proteinExistence type="evidence at protein level"/>
<accession>P68382</accession>
<accession>P05612</accession>
<dbReference type="PIR" id="I31446">
    <property type="entry name" value="I31446"/>
</dbReference>
<dbReference type="SMR" id="P68382"/>
<dbReference type="GO" id="GO:0005576">
    <property type="term" value="C:extracellular region"/>
    <property type="evidence" value="ECO:0007669"/>
    <property type="project" value="UniProtKB-SubCell"/>
</dbReference>
<dbReference type="GO" id="GO:0004867">
    <property type="term" value="F:serine-type endopeptidase inhibitor activity"/>
    <property type="evidence" value="ECO:0007669"/>
    <property type="project" value="UniProtKB-KW"/>
</dbReference>
<dbReference type="CDD" id="cd00104">
    <property type="entry name" value="KAZAL_FS"/>
    <property type="match status" value="1"/>
</dbReference>
<dbReference type="FunFam" id="3.30.60.30:FF:000037">
    <property type="entry name" value="Ovomucoid"/>
    <property type="match status" value="1"/>
</dbReference>
<dbReference type="Gene3D" id="3.30.60.30">
    <property type="match status" value="1"/>
</dbReference>
<dbReference type="InterPro" id="IPR051597">
    <property type="entry name" value="Bifunctional_prot_inhibitor"/>
</dbReference>
<dbReference type="InterPro" id="IPR002350">
    <property type="entry name" value="Kazal_dom"/>
</dbReference>
<dbReference type="InterPro" id="IPR036058">
    <property type="entry name" value="Kazal_dom_sf"/>
</dbReference>
<dbReference type="InterPro" id="IPR001239">
    <property type="entry name" value="Prot_inh_Kazal-m"/>
</dbReference>
<dbReference type="PANTHER" id="PTHR47729:SF1">
    <property type="entry name" value="OVOMUCOID-LIKE-RELATED"/>
    <property type="match status" value="1"/>
</dbReference>
<dbReference type="PANTHER" id="PTHR47729">
    <property type="entry name" value="SERINE PEPTIDASE INHIBITOR, KAZAL TYPE 2, TANDEM DUPLICATE 1-RELATED"/>
    <property type="match status" value="1"/>
</dbReference>
<dbReference type="Pfam" id="PF00050">
    <property type="entry name" value="Kazal_1"/>
    <property type="match status" value="1"/>
</dbReference>
<dbReference type="PRINTS" id="PR00290">
    <property type="entry name" value="KAZALINHBTR"/>
</dbReference>
<dbReference type="SMART" id="SM00280">
    <property type="entry name" value="KAZAL"/>
    <property type="match status" value="1"/>
</dbReference>
<dbReference type="SUPFAM" id="SSF100895">
    <property type="entry name" value="Kazal-type serine protease inhibitors"/>
    <property type="match status" value="1"/>
</dbReference>
<dbReference type="PROSITE" id="PS00282">
    <property type="entry name" value="KAZAL_1"/>
    <property type="match status" value="1"/>
</dbReference>
<dbReference type="PROSITE" id="PS51465">
    <property type="entry name" value="KAZAL_2"/>
    <property type="match status" value="1"/>
</dbReference>
<name>IOVO_ANTVP</name>
<reference key="1">
    <citation type="journal article" date="1987" name="Biochemistry">
        <title>Ovomucoid third domains from 100 avian species: isolation, sequences, and hypervariability of enzyme-inhibitor contact residues.</title>
        <authorList>
            <person name="Laskowski M. Jr."/>
            <person name="Kato I."/>
            <person name="Ardelt W."/>
            <person name="Cook J."/>
            <person name="Denton A."/>
            <person name="Empie M.W."/>
            <person name="Kohr W.J."/>
            <person name="Park S.J."/>
            <person name="Parks K."/>
            <person name="Schatzley B.L."/>
            <person name="Schoenberger O.L."/>
            <person name="Tashiro M."/>
            <person name="Vichot G."/>
            <person name="Whatley H.E."/>
            <person name="Wieczorek A."/>
            <person name="Wieczorek M."/>
        </authorList>
    </citation>
    <scope>PROTEIN SEQUENCE</scope>
</reference>
<evidence type="ECO:0000255" key="1">
    <source>
        <dbReference type="PROSITE-ProRule" id="PRU00798"/>
    </source>
</evidence>
<sequence length="54" mass="5837">TATVDCSDYPKPACTLEYMPFCGSDSKTYSNKCNFCNAVVDSNGTLTLSHFGKC</sequence>
<organism>
    <name type="scientific">Antigone vipio</name>
    <name type="common">White-naped crane</name>
    <name type="synonym">Grus vipio</name>
    <dbReference type="NCBI Taxonomy" id="2717088"/>
    <lineage>
        <taxon>Eukaryota</taxon>
        <taxon>Metazoa</taxon>
        <taxon>Chordata</taxon>
        <taxon>Craniata</taxon>
        <taxon>Vertebrata</taxon>
        <taxon>Euteleostomi</taxon>
        <taxon>Archelosauria</taxon>
        <taxon>Archosauria</taxon>
        <taxon>Dinosauria</taxon>
        <taxon>Saurischia</taxon>
        <taxon>Theropoda</taxon>
        <taxon>Coelurosauria</taxon>
        <taxon>Aves</taxon>
        <taxon>Neognathae</taxon>
        <taxon>Neoaves</taxon>
        <taxon>Gruiformes</taxon>
        <taxon>Gruidae</taxon>
        <taxon>Antigone</taxon>
    </lineage>
</organism>